<dbReference type="EMBL" id="AE004091">
    <property type="protein sequence ID" value="AAG06873.1"/>
    <property type="molecule type" value="Genomic_DNA"/>
</dbReference>
<dbReference type="PIR" id="F83210">
    <property type="entry name" value="F83210"/>
</dbReference>
<dbReference type="RefSeq" id="NP_252175.1">
    <property type="nucleotide sequence ID" value="NC_002516.2"/>
</dbReference>
<dbReference type="RefSeq" id="WP_003113900.1">
    <property type="nucleotide sequence ID" value="NZ_QZGE01000039.1"/>
</dbReference>
<dbReference type="PDB" id="3WA5">
    <property type="method" value="X-ray"/>
    <property type="resolution" value="1.90 A"/>
    <property type="chains" value="B=1-145"/>
</dbReference>
<dbReference type="PDB" id="4LUQ">
    <property type="method" value="X-ray"/>
    <property type="resolution" value="1.77 A"/>
    <property type="chains" value="C/D=23-145"/>
</dbReference>
<dbReference type="PDB" id="4M5F">
    <property type="method" value="X-ray"/>
    <property type="resolution" value="2.50 A"/>
    <property type="chains" value="B=21-145"/>
</dbReference>
<dbReference type="PDB" id="4N7S">
    <property type="method" value="X-ray"/>
    <property type="resolution" value="2.10 A"/>
    <property type="chains" value="B/D=27-145"/>
</dbReference>
<dbReference type="PDB" id="4N80">
    <property type="method" value="X-ray"/>
    <property type="resolution" value="2.40 A"/>
    <property type="chains" value="B=23-144"/>
</dbReference>
<dbReference type="PDB" id="4N88">
    <property type="method" value="X-ray"/>
    <property type="resolution" value="2.80 A"/>
    <property type="chains" value="B/D=27-145"/>
</dbReference>
<dbReference type="PDB" id="8IK0">
    <property type="method" value="EM"/>
    <property type="resolution" value="3.30 A"/>
    <property type="chains" value="A/B/C/D/E/F/G/H=22-145"/>
</dbReference>
<dbReference type="PDB" id="8IK3">
    <property type="method" value="EM"/>
    <property type="resolution" value="3.30 A"/>
    <property type="chains" value="A/B/C/D/E/F/G/H=22-145"/>
</dbReference>
<dbReference type="PDBsum" id="3WA5"/>
<dbReference type="PDBsum" id="4LUQ"/>
<dbReference type="PDBsum" id="4M5F"/>
<dbReference type="PDBsum" id="4N7S"/>
<dbReference type="PDBsum" id="4N80"/>
<dbReference type="PDBsum" id="4N88"/>
<dbReference type="PDBsum" id="8IK0"/>
<dbReference type="PDBsum" id="8IK3"/>
<dbReference type="EMDB" id="EMD-35503"/>
<dbReference type="EMDB" id="EMD-35504"/>
<dbReference type="SMR" id="Q9HYC4"/>
<dbReference type="STRING" id="208964.PA3485"/>
<dbReference type="PaxDb" id="208964-PA3485"/>
<dbReference type="DNASU" id="879938"/>
<dbReference type="GeneID" id="879938"/>
<dbReference type="KEGG" id="pae:PA3485"/>
<dbReference type="PATRIC" id="fig|208964.12.peg.3648"/>
<dbReference type="PseudoCAP" id="PA3485"/>
<dbReference type="HOGENOM" id="CLU_1785220_0_0_6"/>
<dbReference type="InParanoid" id="Q9HYC4"/>
<dbReference type="BioCyc" id="PAER208964:G1FZ6-3553-MONOMER"/>
<dbReference type="EvolutionaryTrace" id="Q9HYC4"/>
<dbReference type="Proteomes" id="UP000002438">
    <property type="component" value="Chromosome"/>
</dbReference>
<dbReference type="GO" id="GO:0046872">
    <property type="term" value="F:metal ion binding"/>
    <property type="evidence" value="ECO:0007669"/>
    <property type="project" value="UniProtKB-KW"/>
</dbReference>
<dbReference type="Gene3D" id="2.60.120.1690">
    <property type="match status" value="1"/>
</dbReference>
<dbReference type="InterPro" id="IPR053762">
    <property type="entry name" value="Toxin-Sub_Inhibitor_sf"/>
</dbReference>
<dbReference type="InterPro" id="IPR054004">
    <property type="entry name" value="Tsi3"/>
</dbReference>
<dbReference type="NCBIfam" id="NF038331">
    <property type="entry name" value="Tsi3_fam"/>
    <property type="match status" value="1"/>
</dbReference>
<dbReference type="Pfam" id="PF22211">
    <property type="entry name" value="Tsi3"/>
    <property type="match status" value="1"/>
</dbReference>
<dbReference type="PROSITE" id="PS51257">
    <property type="entry name" value="PROKAR_LIPOPROTEIN"/>
    <property type="match status" value="1"/>
</dbReference>
<sequence length="145" mass="15792">MKTVALILASLALLACTAESGVDFDKTLTHPNGLVVERPVGFDARRSAEGFRFDEGGKLRNPRQLEVQRQDAPPPPDLASRRLGDGEARYKVEEDDGGSAGSEYRLWAAKPAGARWIVVSASEQSEDGEPTFALAWALLERARLQ</sequence>
<name>TSI3_PSEAE</name>
<gene>
    <name evidence="5" type="primary">tsi3</name>
    <name type="ordered locus">PA3485</name>
</gene>
<keyword id="KW-0002">3D-structure</keyword>
<keyword id="KW-0106">Calcium</keyword>
<keyword id="KW-0449">Lipoprotein</keyword>
<keyword id="KW-0479">Metal-binding</keyword>
<keyword id="KW-0564">Palmitate</keyword>
<keyword id="KW-1185">Reference proteome</keyword>
<keyword id="KW-0732">Signal</keyword>
<evidence type="ECO:0000255" key="1">
    <source>
        <dbReference type="PROSITE-ProRule" id="PRU00303"/>
    </source>
</evidence>
<evidence type="ECO:0000256" key="2">
    <source>
        <dbReference type="SAM" id="MobiDB-lite"/>
    </source>
</evidence>
<evidence type="ECO:0000269" key="3">
    <source>
    </source>
</evidence>
<evidence type="ECO:0000269" key="4">
    <source>
    </source>
</evidence>
<evidence type="ECO:0000303" key="5">
    <source>
    </source>
</evidence>
<evidence type="ECO:0007744" key="6">
    <source>
        <dbReference type="PDB" id="4LUQ"/>
    </source>
</evidence>
<evidence type="ECO:0007744" key="7">
    <source>
        <dbReference type="PDB" id="4M5F"/>
    </source>
</evidence>
<evidence type="ECO:0007744" key="8">
    <source>
        <dbReference type="PDB" id="4N7S"/>
    </source>
</evidence>
<evidence type="ECO:0007744" key="9">
    <source>
        <dbReference type="PDB" id="4N80"/>
    </source>
</evidence>
<evidence type="ECO:0007829" key="10">
    <source>
        <dbReference type="PDB" id="4LUQ"/>
    </source>
</evidence>
<proteinExistence type="evidence at protein level"/>
<comment type="function">
    <text evidence="3 4">Immunity protein that plays a role in preventing early activation of toxin Tse3. Occupies Tse3 substrate binding site and prevents the substrate from entering.</text>
</comment>
<comment type="subunit">
    <text evidence="3 4">Forms a heterotetramer with Tse3 consisting of two Tse3 dimers and two Tsi3 dimers. Formation of the complex inactivates Tse3 enzymatic activity.</text>
</comment>
<organism>
    <name type="scientific">Pseudomonas aeruginosa (strain ATCC 15692 / DSM 22644 / CIP 104116 / JCM 14847 / LMG 12228 / 1C / PRS 101 / PAO1)</name>
    <dbReference type="NCBI Taxonomy" id="208964"/>
    <lineage>
        <taxon>Bacteria</taxon>
        <taxon>Pseudomonadati</taxon>
        <taxon>Pseudomonadota</taxon>
        <taxon>Gammaproteobacteria</taxon>
        <taxon>Pseudomonadales</taxon>
        <taxon>Pseudomonadaceae</taxon>
        <taxon>Pseudomonas</taxon>
    </lineage>
</organism>
<accession>Q9HYC4</accession>
<reference key="1">
    <citation type="journal article" date="2000" name="Nature">
        <title>Complete genome sequence of Pseudomonas aeruginosa PAO1, an opportunistic pathogen.</title>
        <authorList>
            <person name="Stover C.K."/>
            <person name="Pham X.-Q.T."/>
            <person name="Erwin A.L."/>
            <person name="Mizoguchi S.D."/>
            <person name="Warrener P."/>
            <person name="Hickey M.J."/>
            <person name="Brinkman F.S.L."/>
            <person name="Hufnagle W.O."/>
            <person name="Kowalik D.J."/>
            <person name="Lagrou M."/>
            <person name="Garber R.L."/>
            <person name="Goltry L."/>
            <person name="Tolentino E."/>
            <person name="Westbrock-Wadman S."/>
            <person name="Yuan Y."/>
            <person name="Brody L.L."/>
            <person name="Coulter S.N."/>
            <person name="Folger K.R."/>
            <person name="Kas A."/>
            <person name="Larbig K."/>
            <person name="Lim R.M."/>
            <person name="Smith K.A."/>
            <person name="Spencer D.H."/>
            <person name="Wong G.K.-S."/>
            <person name="Wu Z."/>
            <person name="Paulsen I.T."/>
            <person name="Reizer J."/>
            <person name="Saier M.H. Jr."/>
            <person name="Hancock R.E.W."/>
            <person name="Lory S."/>
            <person name="Olson M.V."/>
        </authorList>
    </citation>
    <scope>NUCLEOTIDE SEQUENCE [LARGE SCALE GENOMIC DNA]</scope>
    <source>
        <strain>ATCC 15692 / DSM 22644 / CIP 104116 / JCM 14847 / LMG 12228 / 1C / PRS 101 / PAO1</strain>
    </source>
</reference>
<reference evidence="6" key="2">
    <citation type="journal article" date="2013" name="J. Biol. Chem.">
        <title>Structural Insights on the bacteriolytic and self-protection mechanism of muramidase effector Tse3 in Pseudomonas aeruginosa.</title>
        <authorList>
            <person name="Li L."/>
            <person name="Zhang W."/>
            <person name="Liu Q."/>
            <person name="Gao Y."/>
            <person name="Gao Y."/>
            <person name="Wang Y."/>
            <person name="Wang D.Z."/>
            <person name="Li Z."/>
            <person name="Wang T."/>
        </authorList>
    </citation>
    <scope>X-RAY CRYSTALLOGRAPHY (1.77 ANGSTROMS) OF 23-145 IN COMPLEX WITH CALCIUM</scope>
    <scope>FUNCTION</scope>
    <scope>INTERACTION WITH TSE3</scope>
</reference>
<reference evidence="7 8 9" key="3">
    <citation type="journal article" date="2014" name="Mol. Microbiol.">
        <title>Structural insights into the T6SS effector protein Tse3 and the Tse3-Tsi3 complex from Pseudomonas aeruginosa reveal a calcium-dependent membrane-binding mechanism.</title>
        <authorList>
            <person name="Lu D."/>
            <person name="Shang G."/>
            <person name="Zhang H."/>
            <person name="Yu Q."/>
            <person name="Cong X."/>
            <person name="Yuan J."/>
            <person name="He F."/>
            <person name="Zhu C."/>
            <person name="Zhao Y."/>
            <person name="Yin K."/>
            <person name="Chen Y."/>
            <person name="Hu J."/>
            <person name="Zhang X."/>
            <person name="Yuan Z."/>
            <person name="Xu S."/>
            <person name="Hu W."/>
            <person name="Cang H."/>
            <person name="Gu L."/>
        </authorList>
    </citation>
    <scope>X-RAY CRYSTALLOGRAPHY (2.10 ANGSTROMS) OF 27-145</scope>
    <scope>FUNCTION</scope>
    <scope>INTERACTION WITH TSE3</scope>
</reference>
<feature type="signal peptide" evidence="1">
    <location>
        <begin position="1"/>
        <end position="15"/>
    </location>
</feature>
<feature type="chain" id="PRO_5004327368" description="Immune protein Tsi3" evidence="1">
    <location>
        <begin position="16"/>
        <end position="145"/>
    </location>
</feature>
<feature type="region of interest" description="Disordered" evidence="2">
    <location>
        <begin position="53"/>
        <end position="85"/>
    </location>
</feature>
<feature type="binding site" evidence="6">
    <location>
        <position position="126"/>
    </location>
    <ligand>
        <name>Ca(2+)</name>
        <dbReference type="ChEBI" id="CHEBI:29108"/>
    </ligand>
</feature>
<feature type="lipid moiety-binding region" description="N-palmitoyl cysteine" evidence="1">
    <location>
        <position position="16"/>
    </location>
</feature>
<feature type="lipid moiety-binding region" description="S-diacylglycerol cysteine" evidence="1">
    <location>
        <position position="16"/>
    </location>
</feature>
<feature type="strand" evidence="10">
    <location>
        <begin position="24"/>
        <end position="29"/>
    </location>
</feature>
<feature type="strand" evidence="10">
    <location>
        <begin position="33"/>
        <end position="39"/>
    </location>
</feature>
<feature type="strand" evidence="10">
    <location>
        <begin position="42"/>
        <end position="46"/>
    </location>
</feature>
<feature type="strand" evidence="10">
    <location>
        <begin position="48"/>
        <end position="57"/>
    </location>
</feature>
<feature type="strand" evidence="10">
    <location>
        <begin position="64"/>
        <end position="72"/>
    </location>
</feature>
<feature type="strand" evidence="10">
    <location>
        <begin position="79"/>
        <end position="83"/>
    </location>
</feature>
<feature type="strand" evidence="10">
    <location>
        <begin position="86"/>
        <end position="98"/>
    </location>
</feature>
<feature type="strand" evidence="10">
    <location>
        <begin position="101"/>
        <end position="112"/>
    </location>
</feature>
<feature type="strand" evidence="10">
    <location>
        <begin position="115"/>
        <end position="128"/>
    </location>
</feature>
<feature type="helix" evidence="10">
    <location>
        <begin position="133"/>
        <end position="141"/>
    </location>
</feature>
<protein>
    <recommendedName>
        <fullName evidence="5">Immune protein Tsi3</fullName>
    </recommendedName>
    <alternativeName>
        <fullName>Anti-toxin protein Tsi3</fullName>
    </alternativeName>
</protein>